<reference key="1">
    <citation type="journal article" date="2004" name="Nature">
        <title>The DNA sequence and biology of human chromosome 19.</title>
        <authorList>
            <person name="Grimwood J."/>
            <person name="Gordon L.A."/>
            <person name="Olsen A.S."/>
            <person name="Terry A."/>
            <person name="Schmutz J."/>
            <person name="Lamerdin J.E."/>
            <person name="Hellsten U."/>
            <person name="Goodstein D."/>
            <person name="Couronne O."/>
            <person name="Tran-Gyamfi M."/>
            <person name="Aerts A."/>
            <person name="Altherr M."/>
            <person name="Ashworth L."/>
            <person name="Bajorek E."/>
            <person name="Black S."/>
            <person name="Branscomb E."/>
            <person name="Caenepeel S."/>
            <person name="Carrano A.V."/>
            <person name="Caoile C."/>
            <person name="Chan Y.M."/>
            <person name="Christensen M."/>
            <person name="Cleland C.A."/>
            <person name="Copeland A."/>
            <person name="Dalin E."/>
            <person name="Dehal P."/>
            <person name="Denys M."/>
            <person name="Detter J.C."/>
            <person name="Escobar J."/>
            <person name="Flowers D."/>
            <person name="Fotopulos D."/>
            <person name="Garcia C."/>
            <person name="Georgescu A.M."/>
            <person name="Glavina T."/>
            <person name="Gomez M."/>
            <person name="Gonzales E."/>
            <person name="Groza M."/>
            <person name="Hammon N."/>
            <person name="Hawkins T."/>
            <person name="Haydu L."/>
            <person name="Ho I."/>
            <person name="Huang W."/>
            <person name="Israni S."/>
            <person name="Jett J."/>
            <person name="Kadner K."/>
            <person name="Kimball H."/>
            <person name="Kobayashi A."/>
            <person name="Larionov V."/>
            <person name="Leem S.-H."/>
            <person name="Lopez F."/>
            <person name="Lou Y."/>
            <person name="Lowry S."/>
            <person name="Malfatti S."/>
            <person name="Martinez D."/>
            <person name="McCready P.M."/>
            <person name="Medina C."/>
            <person name="Morgan J."/>
            <person name="Nelson K."/>
            <person name="Nolan M."/>
            <person name="Ovcharenko I."/>
            <person name="Pitluck S."/>
            <person name="Pollard M."/>
            <person name="Popkie A.P."/>
            <person name="Predki P."/>
            <person name="Quan G."/>
            <person name="Ramirez L."/>
            <person name="Rash S."/>
            <person name="Retterer J."/>
            <person name="Rodriguez A."/>
            <person name="Rogers S."/>
            <person name="Salamov A."/>
            <person name="Salazar A."/>
            <person name="She X."/>
            <person name="Smith D."/>
            <person name="Slezak T."/>
            <person name="Solovyev V."/>
            <person name="Thayer N."/>
            <person name="Tice H."/>
            <person name="Tsai M."/>
            <person name="Ustaszewska A."/>
            <person name="Vo N."/>
            <person name="Wagner M."/>
            <person name="Wheeler J."/>
            <person name="Wu K."/>
            <person name="Xie G."/>
            <person name="Yang J."/>
            <person name="Dubchak I."/>
            <person name="Furey T.S."/>
            <person name="DeJong P."/>
            <person name="Dickson M."/>
            <person name="Gordon D."/>
            <person name="Eichler E.E."/>
            <person name="Pennacchio L.A."/>
            <person name="Richardson P."/>
            <person name="Stubbs L."/>
            <person name="Rokhsar D.S."/>
            <person name="Myers R.M."/>
            <person name="Rubin E.M."/>
            <person name="Lucas S.M."/>
        </authorList>
    </citation>
    <scope>NUCLEOTIDE SEQUENCE [LARGE SCALE GENOMIC DNA]</scope>
</reference>
<reference key="2">
    <citation type="submission" date="2005-09" db="EMBL/GenBank/DDBJ databases">
        <authorList>
            <person name="Mural R.J."/>
            <person name="Istrail S."/>
            <person name="Sutton G.G."/>
            <person name="Florea L."/>
            <person name="Halpern A.L."/>
            <person name="Mobarry C.M."/>
            <person name="Lippert R."/>
            <person name="Walenz B."/>
            <person name="Shatkay H."/>
            <person name="Dew I."/>
            <person name="Miller J.R."/>
            <person name="Flanigan M.J."/>
            <person name="Edwards N.J."/>
            <person name="Bolanos R."/>
            <person name="Fasulo D."/>
            <person name="Halldorsson B.V."/>
            <person name="Hannenhalli S."/>
            <person name="Turner R."/>
            <person name="Yooseph S."/>
            <person name="Lu F."/>
            <person name="Nusskern D.R."/>
            <person name="Shue B.C."/>
            <person name="Zheng X.H."/>
            <person name="Zhong F."/>
            <person name="Delcher A.L."/>
            <person name="Huson D.H."/>
            <person name="Kravitz S.A."/>
            <person name="Mouchard L."/>
            <person name="Reinert K."/>
            <person name="Remington K.A."/>
            <person name="Clark A.G."/>
            <person name="Waterman M.S."/>
            <person name="Eichler E.E."/>
            <person name="Adams M.D."/>
            <person name="Hunkapiller M.W."/>
            <person name="Myers E.W."/>
            <person name="Venter J.C."/>
        </authorList>
    </citation>
    <scope>NUCLEOTIDE SEQUENCE [LARGE SCALE GENOMIC DNA]</scope>
    <scope>VARIANT ARG-36</scope>
</reference>
<reference key="3">
    <citation type="journal article" date="2004" name="Genome Res.">
        <title>The status, quality, and expansion of the NIH full-length cDNA project: the Mammalian Gene Collection (MGC).</title>
        <authorList>
            <consortium name="The MGC Project Team"/>
        </authorList>
    </citation>
    <scope>NUCLEOTIDE SEQUENCE [LARGE SCALE MRNA]</scope>
    <source>
        <tissue>Brain</tissue>
    </source>
</reference>
<reference key="4">
    <citation type="submission" date="2000-07" db="EMBL/GenBank/DDBJ databases">
        <authorList>
            <consortium name="The European IMAGE consortium"/>
        </authorList>
    </citation>
    <scope>NUCLEOTIDE SEQUENCE [LARGE SCALE MRNA] OF 8-543</scope>
    <scope>VARIANT ARG-36</scope>
</reference>
<reference key="5">
    <citation type="journal article" date="2020" name="Mol. Ther.">
        <title>GPR108 Is a Highly Conserved AAV Entry Factor.</title>
        <authorList>
            <person name="Dudek A.M."/>
            <person name="Zabaleta N."/>
            <person name="Zinn E."/>
            <person name="Pillay S."/>
            <person name="Zengel J."/>
            <person name="Porter C."/>
            <person name="Franceschini J.S."/>
            <person name="Estelien R."/>
            <person name="Carette J.E."/>
            <person name="Zhou G.L."/>
            <person name="Vandenberghe L.H."/>
        </authorList>
    </citation>
    <scope>FUNCTION (MICROBIAL INFECTION)</scope>
    <scope>SUBCELLULAR LOCATION</scope>
    <scope>DOMAIN (MICROBIAL INFECTION)</scope>
</reference>
<reference key="6">
    <citation type="journal article" date="2020" name="Mol. Ther. Methods Clin. Dev.">
        <title>Pooled Screens Identify GPR108 and TM9SF2 as Host Cell Factors Critical for AAV Transduction.</title>
        <authorList>
            <person name="Meisen W.H."/>
            <person name="Nejad Z.B."/>
            <person name="Hardy M."/>
            <person name="Zhao H."/>
            <person name="Oliverio O."/>
            <person name="Wang S."/>
            <person name="Hale C."/>
            <person name="Ollmann M.M."/>
            <person name="Collins P.J."/>
        </authorList>
    </citation>
    <scope>FUNCTION (MICROBIAL INFECTION)</scope>
    <scope>SUBCELLULAR LOCATION</scope>
</reference>
<accession>Q9NPR9</accession>
<accession>B9EJD7</accession>
<proteinExistence type="evidence at protein level"/>
<evidence type="ECO:0000250" key="1">
    <source>
        <dbReference type="UniProtKB" id="Q91WD0"/>
    </source>
</evidence>
<evidence type="ECO:0000255" key="2"/>
<evidence type="ECO:0000256" key="3">
    <source>
        <dbReference type="SAM" id="MobiDB-lite"/>
    </source>
</evidence>
<evidence type="ECO:0000269" key="4">
    <source>
    </source>
</evidence>
<evidence type="ECO:0000269" key="5">
    <source>
    </source>
</evidence>
<evidence type="ECO:0000269" key="6">
    <source ref="2"/>
</evidence>
<evidence type="ECO:0000269" key="7">
    <source ref="4"/>
</evidence>
<evidence type="ECO:0000305" key="8"/>
<evidence type="ECO:0000312" key="9">
    <source>
        <dbReference type="HGNC" id="HGNC:17829"/>
    </source>
</evidence>
<organism>
    <name type="scientific">Homo sapiens</name>
    <name type="common">Human</name>
    <dbReference type="NCBI Taxonomy" id="9606"/>
    <lineage>
        <taxon>Eukaryota</taxon>
        <taxon>Metazoa</taxon>
        <taxon>Chordata</taxon>
        <taxon>Craniata</taxon>
        <taxon>Vertebrata</taxon>
        <taxon>Euteleostomi</taxon>
        <taxon>Mammalia</taxon>
        <taxon>Eutheria</taxon>
        <taxon>Euarchontoglires</taxon>
        <taxon>Primates</taxon>
        <taxon>Haplorrhini</taxon>
        <taxon>Catarrhini</taxon>
        <taxon>Hominidae</taxon>
        <taxon>Homo</taxon>
    </lineage>
</organism>
<gene>
    <name evidence="9" type="primary">GPR108</name>
    <name type="synonym">LUSTR2</name>
</gene>
<comment type="function">
    <text evidence="1">May play a role in intracellular immune modulation by activating NF-kappaB response and attenuating Toll-like-receptor response.</text>
</comment>
<comment type="function">
    <text evidence="4 5">(Microbial infection) Plays an essential function in adeno-associated virus (AAV) transduction across multiple serotypes except AAV5. May play a critical role in mediating the endosomal virus escape or in the AAV virions trafficking from endosomes to the nucleus.</text>
</comment>
<comment type="interaction">
    <interactant intactId="EBI-11343451">
        <id>Q9NPR9</id>
    </interactant>
    <interactant intactId="EBI-6657396">
        <id>P19397</id>
        <label>CD53</label>
    </interactant>
    <organismsDiffer>false</organismsDiffer>
    <experiments>3</experiments>
</comment>
<comment type="interaction">
    <interactant intactId="EBI-11343451">
        <id>Q9NPR9</id>
    </interactant>
    <interactant intactId="EBI-18304435">
        <id>Q5JX71</id>
        <label>FAM209A</label>
    </interactant>
    <organismsDiffer>false</organismsDiffer>
    <experiments>3</experiments>
</comment>
<comment type="interaction">
    <interactant intactId="EBI-11343451">
        <id>Q9NPR9</id>
    </interactant>
    <interactant intactId="EBI-17458373">
        <id>P48165</id>
        <label>GJA8</label>
    </interactant>
    <organismsDiffer>false</organismsDiffer>
    <experiments>3</experiments>
</comment>
<comment type="interaction">
    <interactant intactId="EBI-11343451">
        <id>Q9NPR9</id>
    </interactant>
    <interactant intactId="EBI-8632435">
        <id>P43628</id>
        <label>KIR2DL3</label>
    </interactant>
    <organismsDiffer>false</organismsDiffer>
    <experiments>3</experiments>
</comment>
<comment type="interaction">
    <interactant intactId="EBI-11343451">
        <id>Q9NPR9</id>
    </interactant>
    <interactant intactId="EBI-7825321">
        <id>Q96E29</id>
        <label>MTERF3</label>
    </interactant>
    <organismsDiffer>false</organismsDiffer>
    <experiments>3</experiments>
</comment>
<comment type="interaction">
    <interactant intactId="EBI-11343451">
        <id>Q9NPR9</id>
    </interactant>
    <interactant intactId="EBI-17263240">
        <id>P15941-11</id>
        <label>MUC1</label>
    </interactant>
    <organismsDiffer>false</organismsDiffer>
    <experiments>3</experiments>
</comment>
<comment type="interaction">
    <interactant intactId="EBI-11343451">
        <id>Q9NPR9</id>
    </interactant>
    <interactant intactId="EBI-10969203">
        <id>O14524-2</id>
        <label>NEMP1</label>
    </interactant>
    <organismsDiffer>false</organismsDiffer>
    <experiments>3</experiments>
</comment>
<comment type="interaction">
    <interactant intactId="EBI-11343451">
        <id>Q9NPR9</id>
    </interactant>
    <interactant intactId="EBI-12887458">
        <id>Q9BU79</id>
        <label>TMEM243</label>
    </interactant>
    <organismsDiffer>false</organismsDiffer>
    <experiments>3</experiments>
</comment>
<comment type="subcellular location">
    <subcellularLocation>
        <location evidence="1">Golgi apparatus</location>
        <location evidence="1">cis-Golgi network membrane</location>
        <topology evidence="1">Multi-pass membrane protein</topology>
    </subcellularLocation>
    <subcellularLocation>
        <location evidence="4">Golgi apparatus</location>
        <location evidence="4">trans-Golgi network membrane</location>
        <topology evidence="1">Multi-pass membrane protein</topology>
    </subcellularLocation>
    <subcellularLocation>
        <location evidence="5">Golgi apparatus membrane</location>
        <topology evidence="2">Multi-pass membrane protein</topology>
    </subcellularLocation>
    <text evidence="1">Colocalizes with TLR3, -7, -4, and -9.</text>
</comment>
<comment type="domain">
    <text evidence="4">(Microbial infection) N- and C-terminal domains are required for AAV transduction.</text>
</comment>
<comment type="similarity">
    <text evidence="8">Belongs to the LU7TM family.</text>
</comment>
<sequence length="543" mass="60633">MAVSERRGLGRGSPAEWGQRLLLVLLLGGCSGRIHQLALTGEKRADIQLNSFGFYTNGSLEVELSVLRLGLREAEEKSLLVGFSLSRVRSGRVRSYSTRDFQDCPLQKNSSSFLVLFLINTKDLQVQVRKYGEQKTLFIFPGLLPEAPSKPGLPKPQATVPRKVDGGGTSAASKPKSTPAVIQGPSGKDKDLVLGLSHLNNSYNFSFHVVIGSQAEEGQYSLNFHNCNNSVPGKEHPFDITVMIREKNPDGFLSAAEMPLFKLYMVMSACFLAAGIFWVSILCRNTYSVFKIHWLMAALAFTKSISLLFHSINYYFINSQGHPIEGLAVMYYIAHLLKGALLFITIALIGSGWAFIKYVLSDKEKKVFGIVIPMQVLANVAYIIIESREEGASDYVLWKEILFLVDLICCGAILFPVVWSIRHLQDASGTDGKVAVNLAKLKLFRHYYVMVICYVYFTRIIAILLQVAVPFQWQWLYQLLVEGSTLAFFVLTGYKFQPTGNNPYLQLPQEDEEDVQMEQVMTDSGFREGLSKVNKTASGRELL</sequence>
<protein>
    <recommendedName>
        <fullName>Protein GPR108</fullName>
    </recommendedName>
    <alternativeName>
        <fullName>Lung seven transmembrane receptor 2</fullName>
    </alternativeName>
</protein>
<dbReference type="EMBL" id="CH471139">
    <property type="protein sequence ID" value="EAW69067.1"/>
    <property type="molecule type" value="Genomic_DNA"/>
</dbReference>
<dbReference type="EMBL" id="AC008760">
    <property type="status" value="NOT_ANNOTATED_CDS"/>
    <property type="molecule type" value="Genomic_DNA"/>
</dbReference>
<dbReference type="EMBL" id="BC146909">
    <property type="protein sequence ID" value="AAI46910.1"/>
    <property type="molecule type" value="mRNA"/>
</dbReference>
<dbReference type="EMBL" id="AL365404">
    <property type="protein sequence ID" value="CAB96950.1"/>
    <property type="molecule type" value="mRNA"/>
</dbReference>
<dbReference type="CCDS" id="CCDS42479.1"/>
<dbReference type="RefSeq" id="NP_001073921.1">
    <property type="nucleotide sequence ID" value="NM_001080452.2"/>
</dbReference>
<dbReference type="BioGRID" id="121254">
    <property type="interactions" value="32"/>
</dbReference>
<dbReference type="FunCoup" id="Q9NPR9">
    <property type="interactions" value="1387"/>
</dbReference>
<dbReference type="IntAct" id="Q9NPR9">
    <property type="interactions" value="18"/>
</dbReference>
<dbReference type="STRING" id="9606.ENSP00000264080"/>
<dbReference type="TCDB" id="9.A.14.22.6">
    <property type="family name" value="the g-protein-coupled receptor (gpcr) family"/>
</dbReference>
<dbReference type="GlyCosmos" id="Q9NPR9">
    <property type="glycosylation" value="7 sites, 2 glycans"/>
</dbReference>
<dbReference type="GlyGen" id="Q9NPR9">
    <property type="glycosylation" value="11 sites, 1 N-linked glycan (1 site), 4 O-linked glycans (5 sites)"/>
</dbReference>
<dbReference type="iPTMnet" id="Q9NPR9"/>
<dbReference type="PhosphoSitePlus" id="Q9NPR9"/>
<dbReference type="SwissPalm" id="Q9NPR9"/>
<dbReference type="BioMuta" id="GPR108"/>
<dbReference type="DMDM" id="296439338"/>
<dbReference type="jPOST" id="Q9NPR9"/>
<dbReference type="MassIVE" id="Q9NPR9"/>
<dbReference type="PaxDb" id="9606-ENSP00000264080"/>
<dbReference type="PeptideAtlas" id="Q9NPR9"/>
<dbReference type="ProteomicsDB" id="82047"/>
<dbReference type="Antibodypedia" id="24252">
    <property type="antibodies" value="203 antibodies from 29 providers"/>
</dbReference>
<dbReference type="DNASU" id="56927"/>
<dbReference type="Ensembl" id="ENST00000264080.12">
    <property type="protein sequence ID" value="ENSP00000264080.5"/>
    <property type="gene ID" value="ENSG00000125734.16"/>
</dbReference>
<dbReference type="GeneID" id="56927"/>
<dbReference type="KEGG" id="hsa:56927"/>
<dbReference type="MANE-Select" id="ENST00000264080.12">
    <property type="protein sequence ID" value="ENSP00000264080.5"/>
    <property type="RefSeq nucleotide sequence ID" value="NM_001080452.2"/>
    <property type="RefSeq protein sequence ID" value="NP_001073921.1"/>
</dbReference>
<dbReference type="UCSC" id="uc002mfp.4">
    <property type="organism name" value="human"/>
</dbReference>
<dbReference type="AGR" id="HGNC:17829"/>
<dbReference type="CTD" id="56927"/>
<dbReference type="DisGeNET" id="56927"/>
<dbReference type="GeneCards" id="GPR108"/>
<dbReference type="HGNC" id="HGNC:17829">
    <property type="gene designation" value="GPR108"/>
</dbReference>
<dbReference type="HPA" id="ENSG00000125734">
    <property type="expression patterns" value="Low tissue specificity"/>
</dbReference>
<dbReference type="MIM" id="618491">
    <property type="type" value="gene"/>
</dbReference>
<dbReference type="neXtProt" id="NX_Q9NPR9"/>
<dbReference type="PharmGKB" id="PA28855"/>
<dbReference type="VEuPathDB" id="HostDB:ENSG00000125734"/>
<dbReference type="eggNOG" id="KOG2569">
    <property type="taxonomic scope" value="Eukaryota"/>
</dbReference>
<dbReference type="GeneTree" id="ENSGT00940000160446"/>
<dbReference type="HOGENOM" id="CLU_020277_4_1_1"/>
<dbReference type="InParanoid" id="Q9NPR9"/>
<dbReference type="OMA" id="RRGLGCW"/>
<dbReference type="OrthoDB" id="29657at2759"/>
<dbReference type="PAN-GO" id="Q9NPR9">
    <property type="GO annotations" value="3 GO annotations based on evolutionary models"/>
</dbReference>
<dbReference type="PhylomeDB" id="Q9NPR9"/>
<dbReference type="TreeFam" id="TF314804"/>
<dbReference type="PathwayCommons" id="Q9NPR9"/>
<dbReference type="SignaLink" id="Q9NPR9"/>
<dbReference type="BioGRID-ORCS" id="56927">
    <property type="hits" value="11 hits in 1155 CRISPR screens"/>
</dbReference>
<dbReference type="ChiTaRS" id="GPR108">
    <property type="organism name" value="human"/>
</dbReference>
<dbReference type="GenomeRNAi" id="56927"/>
<dbReference type="Pharos" id="Q9NPR9">
    <property type="development level" value="Tbio"/>
</dbReference>
<dbReference type="PRO" id="PR:Q9NPR9"/>
<dbReference type="Proteomes" id="UP000005640">
    <property type="component" value="Chromosome 19"/>
</dbReference>
<dbReference type="RNAct" id="Q9NPR9">
    <property type="molecule type" value="protein"/>
</dbReference>
<dbReference type="Bgee" id="ENSG00000125734">
    <property type="expression patterns" value="Expressed in lower esophagus mucosa and 175 other cell types or tissues"/>
</dbReference>
<dbReference type="ExpressionAtlas" id="Q9NPR9">
    <property type="expression patterns" value="baseline and differential"/>
</dbReference>
<dbReference type="GO" id="GO:0033106">
    <property type="term" value="C:cis-Golgi network membrane"/>
    <property type="evidence" value="ECO:0000250"/>
    <property type="project" value="UniProtKB"/>
</dbReference>
<dbReference type="GO" id="GO:0005794">
    <property type="term" value="C:Golgi apparatus"/>
    <property type="evidence" value="ECO:0000314"/>
    <property type="project" value="UniProtKB"/>
</dbReference>
<dbReference type="GO" id="GO:0000139">
    <property type="term" value="C:Golgi membrane"/>
    <property type="evidence" value="ECO:0007669"/>
    <property type="project" value="UniProtKB-SubCell"/>
</dbReference>
<dbReference type="GO" id="GO:0016020">
    <property type="term" value="C:membrane"/>
    <property type="evidence" value="ECO:0000318"/>
    <property type="project" value="GO_Central"/>
</dbReference>
<dbReference type="GO" id="GO:0005802">
    <property type="term" value="C:trans-Golgi network"/>
    <property type="evidence" value="ECO:0000314"/>
    <property type="project" value="UniProtKB"/>
</dbReference>
<dbReference type="GO" id="GO:0051607">
    <property type="term" value="P:defense response to virus"/>
    <property type="evidence" value="ECO:0007669"/>
    <property type="project" value="Ensembl"/>
</dbReference>
<dbReference type="GO" id="GO:0034122">
    <property type="term" value="P:negative regulation of toll-like receptor signaling pathway"/>
    <property type="evidence" value="ECO:0000250"/>
    <property type="project" value="UniProtKB"/>
</dbReference>
<dbReference type="GO" id="GO:0050776">
    <property type="term" value="P:regulation of immune response"/>
    <property type="evidence" value="ECO:0000250"/>
    <property type="project" value="UniProtKB"/>
</dbReference>
<dbReference type="GO" id="GO:0060337">
    <property type="term" value="P:type I interferon-mediated signaling pathway"/>
    <property type="evidence" value="ECO:0007669"/>
    <property type="project" value="Ensembl"/>
</dbReference>
<dbReference type="InterPro" id="IPR053937">
    <property type="entry name" value="GOST_TM"/>
</dbReference>
<dbReference type="InterPro" id="IPR009637">
    <property type="entry name" value="GPR107/GPR108-like"/>
</dbReference>
<dbReference type="PANTHER" id="PTHR21229">
    <property type="entry name" value="LUNG SEVEN TRANSMEMBRANE RECEPTOR"/>
    <property type="match status" value="1"/>
</dbReference>
<dbReference type="PANTHER" id="PTHR21229:SF11">
    <property type="entry name" value="PROTEIN GPR108"/>
    <property type="match status" value="1"/>
</dbReference>
<dbReference type="Pfam" id="PF06814">
    <property type="entry name" value="GOST_TM"/>
    <property type="match status" value="1"/>
</dbReference>
<keyword id="KW-0325">Glycoprotein</keyword>
<keyword id="KW-0333">Golgi apparatus</keyword>
<keyword id="KW-0945">Host-virus interaction</keyword>
<keyword id="KW-0472">Membrane</keyword>
<keyword id="KW-1267">Proteomics identification</keyword>
<keyword id="KW-1185">Reference proteome</keyword>
<keyword id="KW-0732">Signal</keyword>
<keyword id="KW-0812">Transmembrane</keyword>
<keyword id="KW-1133">Transmembrane helix</keyword>
<name>GP108_HUMAN</name>
<feature type="signal peptide" evidence="2">
    <location>
        <begin position="1"/>
        <end position="32"/>
    </location>
</feature>
<feature type="chain" id="PRO_0000045083" description="Protein GPR108">
    <location>
        <begin position="33"/>
        <end position="543"/>
    </location>
</feature>
<feature type="transmembrane region" description="Helical; Name=1" evidence="2">
    <location>
        <begin position="263"/>
        <end position="283"/>
    </location>
</feature>
<feature type="transmembrane region" description="Helical; Name=2" evidence="2">
    <location>
        <begin position="292"/>
        <end position="312"/>
    </location>
</feature>
<feature type="transmembrane region" description="Helical; Name=3" evidence="2">
    <location>
        <begin position="336"/>
        <end position="356"/>
    </location>
</feature>
<feature type="transmembrane region" description="Helical; Name=4" evidence="2">
    <location>
        <begin position="367"/>
        <end position="387"/>
    </location>
</feature>
<feature type="transmembrane region" description="Helical; Name=5" evidence="2">
    <location>
        <begin position="401"/>
        <end position="421"/>
    </location>
</feature>
<feature type="transmembrane region" description="Helical; Name=6" evidence="2">
    <location>
        <begin position="449"/>
        <end position="469"/>
    </location>
</feature>
<feature type="transmembrane region" description="Helical; Name=7" evidence="2">
    <location>
        <begin position="473"/>
        <end position="493"/>
    </location>
</feature>
<feature type="region of interest" description="Disordered" evidence="3">
    <location>
        <begin position="149"/>
        <end position="186"/>
    </location>
</feature>
<feature type="glycosylation site" description="N-linked (GlcNAc...) asparagine" evidence="2">
    <location>
        <position position="57"/>
    </location>
</feature>
<feature type="glycosylation site" description="N-linked (GlcNAc...) asparagine" evidence="2">
    <location>
        <position position="109"/>
    </location>
</feature>
<feature type="glycosylation site" description="N-linked (GlcNAc...) asparagine" evidence="2">
    <location>
        <position position="200"/>
    </location>
</feature>
<feature type="glycosylation site" description="N-linked (GlcNAc...) asparagine" evidence="2">
    <location>
        <position position="204"/>
    </location>
</feature>
<feature type="glycosylation site" description="N-linked (GlcNAc...) asparagine" evidence="2">
    <location>
        <position position="228"/>
    </location>
</feature>
<feature type="glycosylation site" description="N-linked (GlcNAc...) asparagine" evidence="2">
    <location>
        <position position="534"/>
    </location>
</feature>
<feature type="sequence variant" id="VAR_060483" description="In dbSNP:rs340138." evidence="6 7">
    <original>Q</original>
    <variation>R</variation>
    <location>
        <position position="36"/>
    </location>
</feature>
<feature type="sequence variant" id="VAR_056112" description="In dbSNP:rs4807897.">
    <original>L</original>
    <variation>P</variation>
    <location>
        <position position="79"/>
    </location>
</feature>